<protein>
    <recommendedName>
        <fullName>Protein CFT1</fullName>
    </recommendedName>
    <alternativeName>
        <fullName>Cleavage factor two protein 1</fullName>
    </alternativeName>
</protein>
<reference key="1">
    <citation type="journal article" date="1997" name="Nature">
        <title>The nucleotide sequence of Saccharomyces cerevisiae chromosome IV.</title>
        <authorList>
            <person name="Jacq C."/>
            <person name="Alt-Moerbe J."/>
            <person name="Andre B."/>
            <person name="Arnold W."/>
            <person name="Bahr A."/>
            <person name="Ballesta J.P.G."/>
            <person name="Bargues M."/>
            <person name="Baron L."/>
            <person name="Becker A."/>
            <person name="Biteau N."/>
            <person name="Bloecker H."/>
            <person name="Blugeon C."/>
            <person name="Boskovic J."/>
            <person name="Brandt P."/>
            <person name="Brueckner M."/>
            <person name="Buitrago M.J."/>
            <person name="Coster F."/>
            <person name="Delaveau T."/>
            <person name="del Rey F."/>
            <person name="Dujon B."/>
            <person name="Eide L.G."/>
            <person name="Garcia-Cantalejo J.M."/>
            <person name="Goffeau A."/>
            <person name="Gomez-Peris A."/>
            <person name="Granotier C."/>
            <person name="Hanemann V."/>
            <person name="Hankeln T."/>
            <person name="Hoheisel J.D."/>
            <person name="Jaeger W."/>
            <person name="Jimenez A."/>
            <person name="Jonniaux J.-L."/>
            <person name="Kraemer C."/>
            <person name="Kuester H."/>
            <person name="Laamanen P."/>
            <person name="Legros Y."/>
            <person name="Louis E.J."/>
            <person name="Moeller-Rieker S."/>
            <person name="Monnet A."/>
            <person name="Moro M."/>
            <person name="Mueller-Auer S."/>
            <person name="Nussbaumer B."/>
            <person name="Paricio N."/>
            <person name="Paulin L."/>
            <person name="Perea J."/>
            <person name="Perez-Alonso M."/>
            <person name="Perez-Ortin J.E."/>
            <person name="Pohl T.M."/>
            <person name="Prydz H."/>
            <person name="Purnelle B."/>
            <person name="Rasmussen S.W."/>
            <person name="Remacha M.A."/>
            <person name="Revuelta J.L."/>
            <person name="Rieger M."/>
            <person name="Salom D."/>
            <person name="Saluz H.P."/>
            <person name="Saiz J.E."/>
            <person name="Saren A.-M."/>
            <person name="Schaefer M."/>
            <person name="Scharfe M."/>
            <person name="Schmidt E.R."/>
            <person name="Schneider C."/>
            <person name="Scholler P."/>
            <person name="Schwarz S."/>
            <person name="Soler-Mira A."/>
            <person name="Urrestarazu L.A."/>
            <person name="Verhasselt P."/>
            <person name="Vissers S."/>
            <person name="Voet M."/>
            <person name="Volckaert G."/>
            <person name="Wagner G."/>
            <person name="Wambutt R."/>
            <person name="Wedler E."/>
            <person name="Wedler H."/>
            <person name="Woelfl S."/>
            <person name="Harris D.E."/>
            <person name="Bowman S."/>
            <person name="Brown D."/>
            <person name="Churcher C.M."/>
            <person name="Connor R."/>
            <person name="Dedman K."/>
            <person name="Gentles S."/>
            <person name="Hamlin N."/>
            <person name="Hunt S."/>
            <person name="Jones L."/>
            <person name="McDonald S."/>
            <person name="Murphy L.D."/>
            <person name="Niblett D."/>
            <person name="Odell C."/>
            <person name="Oliver K."/>
            <person name="Rajandream M.A."/>
            <person name="Richards C."/>
            <person name="Shore L."/>
            <person name="Walsh S.V."/>
            <person name="Barrell B.G."/>
            <person name="Dietrich F.S."/>
            <person name="Mulligan J.T."/>
            <person name="Allen E."/>
            <person name="Araujo R."/>
            <person name="Aviles E."/>
            <person name="Berno A."/>
            <person name="Carpenter J."/>
            <person name="Chen E."/>
            <person name="Cherry J.M."/>
            <person name="Chung E."/>
            <person name="Duncan M."/>
            <person name="Hunicke-Smith S."/>
            <person name="Hyman R.W."/>
            <person name="Komp C."/>
            <person name="Lashkari D."/>
            <person name="Lew H."/>
            <person name="Lin D."/>
            <person name="Mosedale D."/>
            <person name="Nakahara K."/>
            <person name="Namath A."/>
            <person name="Oefner P."/>
            <person name="Oh C."/>
            <person name="Petel F.X."/>
            <person name="Roberts D."/>
            <person name="Schramm S."/>
            <person name="Schroeder M."/>
            <person name="Shogren T."/>
            <person name="Shroff N."/>
            <person name="Winant A."/>
            <person name="Yelton M.A."/>
            <person name="Botstein D."/>
            <person name="Davis R.W."/>
            <person name="Johnston M."/>
            <person name="Andrews S."/>
            <person name="Brinkman R."/>
            <person name="Cooper J."/>
            <person name="Ding H."/>
            <person name="Du Z."/>
            <person name="Favello A."/>
            <person name="Fulton L."/>
            <person name="Gattung S."/>
            <person name="Greco T."/>
            <person name="Hallsworth K."/>
            <person name="Hawkins J."/>
            <person name="Hillier L.W."/>
            <person name="Jier M."/>
            <person name="Johnson D."/>
            <person name="Johnston L."/>
            <person name="Kirsten J."/>
            <person name="Kucaba T."/>
            <person name="Langston Y."/>
            <person name="Latreille P."/>
            <person name="Le T."/>
            <person name="Mardis E."/>
            <person name="Menezes S."/>
            <person name="Miller N."/>
            <person name="Nhan M."/>
            <person name="Pauley A."/>
            <person name="Peluso D."/>
            <person name="Rifkin L."/>
            <person name="Riles L."/>
            <person name="Taich A."/>
            <person name="Trevaskis E."/>
            <person name="Vignati D."/>
            <person name="Wilcox L."/>
            <person name="Wohldman P."/>
            <person name="Vaudin M."/>
            <person name="Wilson R."/>
            <person name="Waterston R."/>
            <person name="Albermann K."/>
            <person name="Hani J."/>
            <person name="Heumann K."/>
            <person name="Kleine K."/>
            <person name="Mewes H.-W."/>
            <person name="Zollner A."/>
            <person name="Zaccaria P."/>
        </authorList>
    </citation>
    <scope>NUCLEOTIDE SEQUENCE [LARGE SCALE GENOMIC DNA]</scope>
    <source>
        <strain>ATCC 204508 / S288c</strain>
    </source>
</reference>
<reference key="2">
    <citation type="journal article" date="2014" name="G3 (Bethesda)">
        <title>The reference genome sequence of Saccharomyces cerevisiae: Then and now.</title>
        <authorList>
            <person name="Engel S.R."/>
            <person name="Dietrich F.S."/>
            <person name="Fisk D.G."/>
            <person name="Binkley G."/>
            <person name="Balakrishnan R."/>
            <person name="Costanzo M.C."/>
            <person name="Dwight S.S."/>
            <person name="Hitz B.C."/>
            <person name="Karra K."/>
            <person name="Nash R.S."/>
            <person name="Weng S."/>
            <person name="Wong E.D."/>
            <person name="Lloyd P."/>
            <person name="Skrzypek M.S."/>
            <person name="Miyasato S.R."/>
            <person name="Simison M."/>
            <person name="Cherry J.M."/>
        </authorList>
    </citation>
    <scope>GENOME REANNOTATION</scope>
    <source>
        <strain>ATCC 204508 / S288c</strain>
    </source>
</reference>
<reference key="3">
    <citation type="journal article" date="1996" name="Science">
        <title>Dependence of yeast pre-mRNA 3'-end processing on CFT1: a sequence homolog of the mammalian AAUAAA binding factor.</title>
        <authorList>
            <person name="Stumpf G."/>
            <person name="Domdey H."/>
        </authorList>
    </citation>
    <scope>FUNCTION</scope>
</reference>
<reference key="4">
    <citation type="journal article" date="2002" name="EMBO J.">
        <title>Yhh1p/Cft1p directly links poly(A) site recognition and RNA polymerase II transcription termination.</title>
        <authorList>
            <person name="Dichtl B."/>
            <person name="Blank D."/>
            <person name="Sadowski M."/>
            <person name="Hubner W."/>
            <person name="Weiser S."/>
            <person name="Keller W."/>
        </authorList>
    </citation>
    <scope>FUNCTION</scope>
    <scope>RNA-BINDING</scope>
    <scope>INTERACTION WITH RPB1</scope>
</reference>
<reference key="5">
    <citation type="journal article" date="2003" name="J. Biol. Chem.">
        <title>Organization and function of APT, a subcomplex of the yeast cleavage and polyadenylation factor involved in the formation of mRNA and small nucleolar RNA 3'-ends.</title>
        <authorList>
            <person name="Nedea E."/>
            <person name="He X."/>
            <person name="Kim M."/>
            <person name="Pootoolal J."/>
            <person name="Zhong G."/>
            <person name="Canadien V."/>
            <person name="Hughes T."/>
            <person name="Buratowski S."/>
            <person name="Moore C.L."/>
            <person name="Greenblatt J."/>
        </authorList>
    </citation>
    <scope>IDENTIFICATION IN THE CPF COMPLEX</scope>
    <scope>SUBCELLULAR LOCATION</scope>
    <scope>IDENTIFICATION BY MASS SPECTROMETRY</scope>
</reference>
<reference key="6">
    <citation type="journal article" date="2003" name="Nature">
        <title>Global analysis of protein localization in budding yeast.</title>
        <authorList>
            <person name="Huh W.-K."/>
            <person name="Falvo J.V."/>
            <person name="Gerke L.C."/>
            <person name="Carroll A.S."/>
            <person name="Howson R.W."/>
            <person name="Weissman J.S."/>
            <person name="O'Shea E.K."/>
        </authorList>
    </citation>
    <scope>SUBCELLULAR LOCATION [LARGE SCALE ANALYSIS]</scope>
</reference>
<reference key="7">
    <citation type="journal article" date="2003" name="Nature">
        <title>Global analysis of protein expression in yeast.</title>
        <authorList>
            <person name="Ghaemmaghami S."/>
            <person name="Huh W.-K."/>
            <person name="Bower K."/>
            <person name="Howson R.W."/>
            <person name="Belle A."/>
            <person name="Dephoure N."/>
            <person name="O'Shea E.K."/>
            <person name="Weissman J.S."/>
        </authorList>
    </citation>
    <scope>LEVEL OF PROTEIN EXPRESSION [LARGE SCALE ANALYSIS]</scope>
</reference>
<organism>
    <name type="scientific">Saccharomyces cerevisiae (strain ATCC 204508 / S288c)</name>
    <name type="common">Baker's yeast</name>
    <dbReference type="NCBI Taxonomy" id="559292"/>
    <lineage>
        <taxon>Eukaryota</taxon>
        <taxon>Fungi</taxon>
        <taxon>Dikarya</taxon>
        <taxon>Ascomycota</taxon>
        <taxon>Saccharomycotina</taxon>
        <taxon>Saccharomycetes</taxon>
        <taxon>Saccharomycetales</taxon>
        <taxon>Saccharomycetaceae</taxon>
        <taxon>Saccharomyces</taxon>
    </lineage>
</organism>
<comment type="function">
    <text evidence="2 6">RNA-binding component of the cleavage and polyadenylation factor (CPF) complex, which plays a key role in polyadenylation-dependent pre-mRNA 3'-end formation and cooperates with cleavage factors including the CFIA complex and NAB4/CFIB. Involved in poly(A) site recognition. May be involved in coupling transcription termination and mRNA 3'-end formation.</text>
</comment>
<comment type="subunit">
    <text evidence="2 3">Component of the cleavage and polyadenylation factor (CPF) complex, which is composed of at least PTI1, SYC1, SSU72, GLC7, MPE1, REF2, PFS2, PTA1, YSH1/BRR5, SWD2, CFT2/YDH1, YTH1, CFT1/YHH1, FIP1 and PAP1. Interacts with the phosphorylated CTD domain of RPB1/RNA polymerase II.</text>
</comment>
<comment type="interaction">
    <interactant intactId="EBI-32872">
        <id>Q06632</id>
    </interactant>
    <interactant intactId="EBI-26710">
        <id>P35728</id>
        <label>MPE1</label>
    </interactant>
    <organismsDiffer>false</organismsDiffer>
    <experiments>6</experiments>
</comment>
<comment type="interaction">
    <interactant intactId="EBI-32872">
        <id>Q06632</id>
    </interactant>
    <interactant intactId="EBI-12917">
        <id>P29468</id>
        <label>PAP1</label>
    </interactant>
    <organismsDiffer>false</organismsDiffer>
    <experiments>6</experiments>
</comment>
<comment type="subcellular location">
    <subcellularLocation>
        <location evidence="3 4">Nucleus</location>
    </subcellularLocation>
</comment>
<comment type="miscellaneous">
    <text evidence="5">Present with 639 molecules/cell in log phase SD medium.</text>
</comment>
<comment type="similarity">
    <text evidence="7">Belongs to the CFT1 family.</text>
</comment>
<evidence type="ECO:0000256" key="1">
    <source>
        <dbReference type="SAM" id="MobiDB-lite"/>
    </source>
</evidence>
<evidence type="ECO:0000269" key="2">
    <source>
    </source>
</evidence>
<evidence type="ECO:0000269" key="3">
    <source>
    </source>
</evidence>
<evidence type="ECO:0000269" key="4">
    <source>
    </source>
</evidence>
<evidence type="ECO:0000269" key="5">
    <source>
    </source>
</evidence>
<evidence type="ECO:0000269" key="6">
    <source>
    </source>
</evidence>
<evidence type="ECO:0000305" key="7"/>
<evidence type="ECO:0007829" key="8">
    <source>
        <dbReference type="PDB" id="7ZGP"/>
    </source>
</evidence>
<evidence type="ECO:0007829" key="9">
    <source>
        <dbReference type="PDB" id="7ZGQ"/>
    </source>
</evidence>
<evidence type="ECO:0007829" key="10">
    <source>
        <dbReference type="PDB" id="7ZGR"/>
    </source>
</evidence>
<feature type="chain" id="PRO_0000076203" description="Protein CFT1">
    <location>
        <begin position="1"/>
        <end position="1357"/>
    </location>
</feature>
<feature type="region of interest" description="Disordered" evidence="1">
    <location>
        <begin position="445"/>
        <end position="465"/>
    </location>
</feature>
<feature type="compositionally biased region" description="Polar residues" evidence="1">
    <location>
        <begin position="450"/>
        <end position="459"/>
    </location>
</feature>
<feature type="strand" evidence="10">
    <location>
        <begin position="2"/>
        <end position="8"/>
    </location>
</feature>
<feature type="strand" evidence="10">
    <location>
        <begin position="15"/>
        <end position="19"/>
    </location>
</feature>
<feature type="strand" evidence="10">
    <location>
        <begin position="24"/>
        <end position="26"/>
    </location>
</feature>
<feature type="strand" evidence="10">
    <location>
        <begin position="28"/>
        <end position="42"/>
    </location>
</feature>
<feature type="strand" evidence="10">
    <location>
        <begin position="48"/>
        <end position="55"/>
    </location>
</feature>
<feature type="strand" evidence="10">
    <location>
        <begin position="60"/>
        <end position="67"/>
    </location>
</feature>
<feature type="strand" evidence="10">
    <location>
        <begin position="72"/>
        <end position="80"/>
    </location>
</feature>
<feature type="turn" evidence="10">
    <location>
        <begin position="81"/>
        <end position="83"/>
    </location>
</feature>
<feature type="strand" evidence="10">
    <location>
        <begin position="84"/>
        <end position="91"/>
    </location>
</feature>
<feature type="turn" evidence="10">
    <location>
        <begin position="92"/>
        <end position="95"/>
    </location>
</feature>
<feature type="strand" evidence="10">
    <location>
        <begin position="96"/>
        <end position="104"/>
    </location>
</feature>
<feature type="helix" evidence="10">
    <location>
        <begin position="106"/>
        <end position="111"/>
    </location>
</feature>
<feature type="strand" evidence="10">
    <location>
        <begin position="122"/>
        <end position="125"/>
    </location>
</feature>
<feature type="strand" evidence="10">
    <location>
        <begin position="129"/>
        <end position="145"/>
    </location>
</feature>
<feature type="strand" evidence="10">
    <location>
        <begin position="199"/>
        <end position="202"/>
    </location>
</feature>
<feature type="helix" evidence="10">
    <location>
        <begin position="203"/>
        <end position="205"/>
    </location>
</feature>
<feature type="strand" evidence="10">
    <location>
        <begin position="212"/>
        <end position="218"/>
    </location>
</feature>
<feature type="strand" evidence="10">
    <location>
        <begin position="226"/>
        <end position="231"/>
    </location>
</feature>
<feature type="helix" evidence="10">
    <location>
        <begin position="238"/>
        <end position="243"/>
    </location>
</feature>
<feature type="strand" evidence="10">
    <location>
        <begin position="248"/>
        <end position="259"/>
    </location>
</feature>
<feature type="strand" evidence="10">
    <location>
        <begin position="264"/>
        <end position="277"/>
    </location>
</feature>
<feature type="strand" evidence="10">
    <location>
        <begin position="281"/>
        <end position="286"/>
    </location>
</feature>
<feature type="strand" evidence="10">
    <location>
        <begin position="288"/>
        <end position="303"/>
    </location>
</feature>
<feature type="strand" evidence="10">
    <location>
        <begin position="308"/>
        <end position="313"/>
    </location>
</feature>
<feature type="strand" evidence="9">
    <location>
        <begin position="315"/>
        <end position="317"/>
    </location>
</feature>
<feature type="turn" evidence="10">
    <location>
        <begin position="320"/>
        <end position="322"/>
    </location>
</feature>
<feature type="strand" evidence="10">
    <location>
        <begin position="325"/>
        <end position="330"/>
    </location>
</feature>
<feature type="strand" evidence="10">
    <location>
        <begin position="339"/>
        <end position="341"/>
    </location>
</feature>
<feature type="strand" evidence="10">
    <location>
        <begin position="344"/>
        <end position="347"/>
    </location>
</feature>
<feature type="strand" evidence="10">
    <location>
        <begin position="353"/>
        <end position="355"/>
    </location>
</feature>
<feature type="strand" evidence="10">
    <location>
        <begin position="362"/>
        <end position="366"/>
    </location>
</feature>
<feature type="strand" evidence="10">
    <location>
        <begin position="372"/>
        <end position="377"/>
    </location>
</feature>
<feature type="strand" evidence="10">
    <location>
        <begin position="380"/>
        <end position="383"/>
    </location>
</feature>
<feature type="strand" evidence="10">
    <location>
        <begin position="387"/>
        <end position="391"/>
    </location>
</feature>
<feature type="turn" evidence="10">
    <location>
        <begin position="398"/>
        <end position="401"/>
    </location>
</feature>
<feature type="strand" evidence="10">
    <location>
        <begin position="404"/>
        <end position="410"/>
    </location>
</feature>
<feature type="strand" evidence="10">
    <location>
        <begin position="417"/>
        <end position="429"/>
    </location>
</feature>
<feature type="strand" evidence="10">
    <location>
        <begin position="431"/>
        <end position="436"/>
    </location>
</feature>
<feature type="strand" evidence="10">
    <location>
        <begin position="499"/>
        <end position="505"/>
    </location>
</feature>
<feature type="strand" evidence="10">
    <location>
        <begin position="513"/>
        <end position="517"/>
    </location>
</feature>
<feature type="strand" evidence="9">
    <location>
        <begin position="519"/>
        <end position="521"/>
    </location>
</feature>
<feature type="strand" evidence="10">
    <location>
        <begin position="522"/>
        <end position="526"/>
    </location>
</feature>
<feature type="turn" evidence="10">
    <location>
        <begin position="532"/>
        <end position="535"/>
    </location>
</feature>
<feature type="strand" evidence="10">
    <location>
        <begin position="538"/>
        <end position="543"/>
    </location>
</feature>
<feature type="strand" evidence="10">
    <location>
        <begin position="550"/>
        <end position="554"/>
    </location>
</feature>
<feature type="strand" evidence="10">
    <location>
        <begin position="556"/>
        <end position="558"/>
    </location>
</feature>
<feature type="strand" evidence="10">
    <location>
        <begin position="561"/>
        <end position="568"/>
    </location>
</feature>
<feature type="strand" evidence="10">
    <location>
        <begin position="571"/>
        <end position="577"/>
    </location>
</feature>
<feature type="strand" evidence="10">
    <location>
        <begin position="579"/>
        <end position="582"/>
    </location>
</feature>
<feature type="strand" evidence="10">
    <location>
        <begin position="584"/>
        <end position="590"/>
    </location>
</feature>
<feature type="turn" evidence="10">
    <location>
        <begin position="591"/>
        <end position="594"/>
    </location>
</feature>
<feature type="strand" evidence="10">
    <location>
        <begin position="595"/>
        <end position="597"/>
    </location>
</feature>
<feature type="turn" evidence="9">
    <location>
        <begin position="601"/>
        <end position="604"/>
    </location>
</feature>
<feature type="strand" evidence="10">
    <location>
        <begin position="619"/>
        <end position="625"/>
    </location>
</feature>
<feature type="turn" evidence="10">
    <location>
        <begin position="626"/>
        <end position="629"/>
    </location>
</feature>
<feature type="strand" evidence="10">
    <location>
        <begin position="630"/>
        <end position="643"/>
    </location>
</feature>
<feature type="strand" evidence="10">
    <location>
        <begin position="650"/>
        <end position="653"/>
    </location>
</feature>
<feature type="strand" evidence="10">
    <location>
        <begin position="658"/>
        <end position="663"/>
    </location>
</feature>
<feature type="strand" evidence="10">
    <location>
        <begin position="665"/>
        <end position="672"/>
    </location>
</feature>
<feature type="strand" evidence="10">
    <location>
        <begin position="677"/>
        <end position="681"/>
    </location>
</feature>
<feature type="turn" evidence="10">
    <location>
        <begin position="684"/>
        <end position="686"/>
    </location>
</feature>
<feature type="helix" evidence="10">
    <location>
        <begin position="697"/>
        <end position="700"/>
    </location>
</feature>
<feature type="strand" evidence="10">
    <location>
        <begin position="704"/>
        <end position="713"/>
    </location>
</feature>
<feature type="helix" evidence="10">
    <location>
        <begin position="716"/>
        <end position="718"/>
    </location>
</feature>
<feature type="strand" evidence="9">
    <location>
        <begin position="725"/>
        <end position="727"/>
    </location>
</feature>
<feature type="strand" evidence="10">
    <location>
        <begin position="729"/>
        <end position="736"/>
    </location>
</feature>
<feature type="strand" evidence="10">
    <location>
        <begin position="741"/>
        <end position="743"/>
    </location>
</feature>
<feature type="strand" evidence="10">
    <location>
        <begin position="753"/>
        <end position="756"/>
    </location>
</feature>
<feature type="turn" evidence="10">
    <location>
        <begin position="757"/>
        <end position="761"/>
    </location>
</feature>
<feature type="strand" evidence="10">
    <location>
        <begin position="763"/>
        <end position="769"/>
    </location>
</feature>
<feature type="strand" evidence="10">
    <location>
        <begin position="782"/>
        <end position="794"/>
    </location>
</feature>
<feature type="strand" evidence="10">
    <location>
        <begin position="796"/>
        <end position="803"/>
    </location>
</feature>
<feature type="strand" evidence="10">
    <location>
        <begin position="808"/>
        <end position="813"/>
    </location>
</feature>
<feature type="strand" evidence="10">
    <location>
        <begin position="815"/>
        <end position="817"/>
    </location>
</feature>
<feature type="strand" evidence="10">
    <location>
        <begin position="820"/>
        <end position="822"/>
    </location>
</feature>
<feature type="strand" evidence="10">
    <location>
        <begin position="825"/>
        <end position="827"/>
    </location>
</feature>
<feature type="strand" evidence="10">
    <location>
        <begin position="836"/>
        <end position="838"/>
    </location>
</feature>
<feature type="turn" evidence="10">
    <location>
        <begin position="839"/>
        <end position="841"/>
    </location>
</feature>
<feature type="helix" evidence="10">
    <location>
        <begin position="842"/>
        <end position="845"/>
    </location>
</feature>
<feature type="strand" evidence="10">
    <location>
        <begin position="851"/>
        <end position="855"/>
    </location>
</feature>
<feature type="strand" evidence="10">
    <location>
        <begin position="857"/>
        <end position="859"/>
    </location>
</feature>
<feature type="strand" evidence="10">
    <location>
        <begin position="861"/>
        <end position="865"/>
    </location>
</feature>
<feature type="strand" evidence="10">
    <location>
        <begin position="867"/>
        <end position="869"/>
    </location>
</feature>
<feature type="strand" evidence="10">
    <location>
        <begin position="871"/>
        <end position="874"/>
    </location>
</feature>
<feature type="strand" evidence="10">
    <location>
        <begin position="882"/>
        <end position="886"/>
    </location>
</feature>
<feature type="strand" evidence="10">
    <location>
        <begin position="893"/>
        <end position="896"/>
    </location>
</feature>
<feature type="strand" evidence="10">
    <location>
        <begin position="898"/>
        <end position="900"/>
    </location>
</feature>
<feature type="strand" evidence="10">
    <location>
        <begin position="902"/>
        <end position="905"/>
    </location>
</feature>
<feature type="strand" evidence="10">
    <location>
        <begin position="909"/>
        <end position="915"/>
    </location>
</feature>
<feature type="strand" evidence="10">
    <location>
        <begin position="919"/>
        <end position="922"/>
    </location>
</feature>
<feature type="strand" evidence="10">
    <location>
        <begin position="929"/>
        <end position="932"/>
    </location>
</feature>
<feature type="strand" evidence="10">
    <location>
        <begin position="937"/>
        <end position="939"/>
    </location>
</feature>
<feature type="strand" evidence="10">
    <location>
        <begin position="944"/>
        <end position="950"/>
    </location>
</feature>
<feature type="turn" evidence="10">
    <location>
        <begin position="951"/>
        <end position="954"/>
    </location>
</feature>
<feature type="strand" evidence="10">
    <location>
        <begin position="955"/>
        <end position="962"/>
    </location>
</feature>
<feature type="strand" evidence="10">
    <location>
        <begin position="971"/>
        <end position="973"/>
    </location>
</feature>
<feature type="strand" evidence="8">
    <location>
        <begin position="981"/>
        <end position="983"/>
    </location>
</feature>
<feature type="strand" evidence="10">
    <location>
        <begin position="990"/>
        <end position="996"/>
    </location>
</feature>
<feature type="turn" evidence="10">
    <location>
        <begin position="998"/>
        <end position="1000"/>
    </location>
</feature>
<feature type="strand" evidence="10">
    <location>
        <begin position="1003"/>
        <end position="1011"/>
    </location>
</feature>
<feature type="strand" evidence="10">
    <location>
        <begin position="1013"/>
        <end position="1023"/>
    </location>
</feature>
<feature type="turn" evidence="10">
    <location>
        <begin position="1027"/>
        <end position="1029"/>
    </location>
</feature>
<feature type="strand" evidence="10">
    <location>
        <begin position="1033"/>
        <end position="1042"/>
    </location>
</feature>
<feature type="strand" evidence="8">
    <location>
        <begin position="1046"/>
        <end position="1048"/>
    </location>
</feature>
<feature type="strand" evidence="10">
    <location>
        <begin position="1051"/>
        <end position="1061"/>
    </location>
</feature>
<feature type="strand" evidence="10">
    <location>
        <begin position="1068"/>
        <end position="1070"/>
    </location>
</feature>
<feature type="strand" evidence="10">
    <location>
        <begin position="1073"/>
        <end position="1085"/>
    </location>
</feature>
<feature type="strand" evidence="10">
    <location>
        <begin position="1090"/>
        <end position="1093"/>
    </location>
</feature>
<feature type="strand" evidence="10">
    <location>
        <begin position="1096"/>
        <end position="1101"/>
    </location>
</feature>
<feature type="strand" evidence="10">
    <location>
        <begin position="1104"/>
        <end position="1110"/>
    </location>
</feature>
<feature type="strand" evidence="10">
    <location>
        <begin position="1116"/>
        <end position="1122"/>
    </location>
</feature>
<feature type="strand" evidence="10">
    <location>
        <begin position="1128"/>
        <end position="1134"/>
    </location>
</feature>
<feature type="strand" evidence="10">
    <location>
        <begin position="1137"/>
        <end position="1145"/>
    </location>
</feature>
<feature type="strand" evidence="10">
    <location>
        <begin position="1147"/>
        <end position="1153"/>
    </location>
</feature>
<feature type="turn" evidence="10">
    <location>
        <begin position="1154"/>
        <end position="1157"/>
    </location>
</feature>
<feature type="strand" evidence="10">
    <location>
        <begin position="1158"/>
        <end position="1167"/>
    </location>
</feature>
<feature type="strand" evidence="10">
    <location>
        <begin position="1171"/>
        <end position="1177"/>
    </location>
</feature>
<feature type="strand" evidence="10">
    <location>
        <begin position="1184"/>
        <end position="1189"/>
    </location>
</feature>
<feature type="strand" evidence="10">
    <location>
        <begin position="1192"/>
        <end position="1198"/>
    </location>
</feature>
<feature type="strand" evidence="9">
    <location>
        <begin position="1201"/>
        <end position="1203"/>
    </location>
</feature>
<feature type="helix" evidence="10">
    <location>
        <begin position="1204"/>
        <end position="1206"/>
    </location>
</feature>
<feature type="turn" evidence="10">
    <location>
        <begin position="1207"/>
        <end position="1210"/>
    </location>
</feature>
<feature type="strand" evidence="10">
    <location>
        <begin position="1211"/>
        <end position="1219"/>
    </location>
</feature>
<feature type="strand" evidence="10">
    <location>
        <begin position="1224"/>
        <end position="1231"/>
    </location>
</feature>
<feature type="strand" evidence="10">
    <location>
        <begin position="1244"/>
        <end position="1250"/>
    </location>
</feature>
<feature type="strand" evidence="10">
    <location>
        <begin position="1255"/>
        <end position="1260"/>
    </location>
</feature>
<feature type="helix" evidence="10">
    <location>
        <begin position="1263"/>
        <end position="1279"/>
    </location>
</feature>
<feature type="strand" evidence="10">
    <location>
        <begin position="1283"/>
        <end position="1285"/>
    </location>
</feature>
<feature type="helix" evidence="10">
    <location>
        <begin position="1288"/>
        <end position="1293"/>
    </location>
</feature>
<feature type="turn" evidence="10">
    <location>
        <begin position="1296"/>
        <end position="1300"/>
    </location>
</feature>
<feature type="helix" evidence="10">
    <location>
        <begin position="1310"/>
        <end position="1317"/>
    </location>
</feature>
<feature type="helix" evidence="10">
    <location>
        <begin position="1321"/>
        <end position="1328"/>
    </location>
</feature>
<feature type="helix" evidence="10">
    <location>
        <begin position="1335"/>
        <end position="1347"/>
    </location>
</feature>
<feature type="helix" evidence="10">
    <location>
        <begin position="1349"/>
        <end position="1354"/>
    </location>
</feature>
<name>CFT1_YEAST</name>
<proteinExistence type="evidence at protein level"/>
<dbReference type="EMBL" id="U28374">
    <property type="protein sequence ID" value="AAB64737.1"/>
    <property type="molecule type" value="Genomic_DNA"/>
</dbReference>
<dbReference type="EMBL" id="BK006938">
    <property type="protein sequence ID" value="DAA12140.1"/>
    <property type="molecule type" value="Genomic_DNA"/>
</dbReference>
<dbReference type="PIR" id="S61187">
    <property type="entry name" value="S61187"/>
</dbReference>
<dbReference type="RefSeq" id="NP_010587.1">
    <property type="nucleotide sequence ID" value="NM_001180609.1"/>
</dbReference>
<dbReference type="PDB" id="6EOJ">
    <property type="method" value="EM"/>
    <property type="resolution" value="3.55 A"/>
    <property type="chains" value="A=1-1357"/>
</dbReference>
<dbReference type="PDB" id="7ZGP">
    <property type="method" value="EM"/>
    <property type="resolution" value="2.70 A"/>
    <property type="chains" value="A=1-1357"/>
</dbReference>
<dbReference type="PDB" id="7ZGQ">
    <property type="method" value="EM"/>
    <property type="resolution" value="2.80 A"/>
    <property type="chains" value="A=1-1357"/>
</dbReference>
<dbReference type="PDB" id="7ZGR">
    <property type="method" value="EM"/>
    <property type="resolution" value="2.60 A"/>
    <property type="chains" value="A=1-1357"/>
</dbReference>
<dbReference type="PDBsum" id="6EOJ"/>
<dbReference type="PDBsum" id="7ZGP"/>
<dbReference type="PDBsum" id="7ZGQ"/>
<dbReference type="PDBsum" id="7ZGR"/>
<dbReference type="EMDB" id="EMD-14710"/>
<dbReference type="EMDB" id="EMD-14711"/>
<dbReference type="EMDB" id="EMD-14712"/>
<dbReference type="EMDB" id="EMD-3908"/>
<dbReference type="SMR" id="Q06632"/>
<dbReference type="BioGRID" id="32353">
    <property type="interactions" value="113"/>
</dbReference>
<dbReference type="ComplexPortal" id="CPX-1053">
    <property type="entry name" value="Cleavage and polyadenylation specificity factor complex"/>
</dbReference>
<dbReference type="DIP" id="DIP-2467N"/>
<dbReference type="FunCoup" id="Q06632">
    <property type="interactions" value="1368"/>
</dbReference>
<dbReference type="IntAct" id="Q06632">
    <property type="interactions" value="35"/>
</dbReference>
<dbReference type="MINT" id="Q06632"/>
<dbReference type="STRING" id="4932.YDR301W"/>
<dbReference type="iPTMnet" id="Q06632"/>
<dbReference type="PaxDb" id="4932-YDR301W"/>
<dbReference type="PeptideAtlas" id="Q06632"/>
<dbReference type="EnsemblFungi" id="YDR301W_mRNA">
    <property type="protein sequence ID" value="YDR301W"/>
    <property type="gene ID" value="YDR301W"/>
</dbReference>
<dbReference type="GeneID" id="851895"/>
<dbReference type="KEGG" id="sce:YDR301W"/>
<dbReference type="AGR" id="SGD:S000002709"/>
<dbReference type="SGD" id="S000002709">
    <property type="gene designation" value="CFT1"/>
</dbReference>
<dbReference type="VEuPathDB" id="FungiDB:YDR301W"/>
<dbReference type="eggNOG" id="KOG1896">
    <property type="taxonomic scope" value="Eukaryota"/>
</dbReference>
<dbReference type="GeneTree" id="ENSGT00950000183151"/>
<dbReference type="HOGENOM" id="CLU_002414_0_0_1"/>
<dbReference type="InParanoid" id="Q06632"/>
<dbReference type="OMA" id="PMTKFKL"/>
<dbReference type="OrthoDB" id="6109at2759"/>
<dbReference type="BioCyc" id="YEAST:G3O-29861-MONOMER"/>
<dbReference type="Reactome" id="R-SCE-77595">
    <property type="pathway name" value="Processing of Intronless Pre-mRNAs"/>
</dbReference>
<dbReference type="BioGRID-ORCS" id="851895">
    <property type="hits" value="6 hits in 10 CRISPR screens"/>
</dbReference>
<dbReference type="PRO" id="PR:Q06632"/>
<dbReference type="Proteomes" id="UP000002311">
    <property type="component" value="Chromosome IV"/>
</dbReference>
<dbReference type="RNAct" id="Q06632">
    <property type="molecule type" value="protein"/>
</dbReference>
<dbReference type="GO" id="GO:0005739">
    <property type="term" value="C:mitochondrion"/>
    <property type="evidence" value="ECO:0007005"/>
    <property type="project" value="SGD"/>
</dbReference>
<dbReference type="GO" id="GO:0005847">
    <property type="term" value="C:mRNA cleavage and polyadenylation specificity factor complex"/>
    <property type="evidence" value="ECO:0000314"/>
    <property type="project" value="SGD"/>
</dbReference>
<dbReference type="GO" id="GO:0005634">
    <property type="term" value="C:nucleus"/>
    <property type="evidence" value="ECO:0007005"/>
    <property type="project" value="SGD"/>
</dbReference>
<dbReference type="GO" id="GO:0003723">
    <property type="term" value="F:RNA binding"/>
    <property type="evidence" value="ECO:0000314"/>
    <property type="project" value="SGD"/>
</dbReference>
<dbReference type="GO" id="GO:0006397">
    <property type="term" value="P:mRNA processing"/>
    <property type="evidence" value="ECO:0007669"/>
    <property type="project" value="UniProtKB-KW"/>
</dbReference>
<dbReference type="GO" id="GO:0006369">
    <property type="term" value="P:termination of RNA polymerase II transcription"/>
    <property type="evidence" value="ECO:0000315"/>
    <property type="project" value="SGD"/>
</dbReference>
<dbReference type="GO" id="GO:0030846">
    <property type="term" value="P:termination of RNA polymerase II transcription, poly(A)-coupled"/>
    <property type="evidence" value="ECO:0000303"/>
    <property type="project" value="ComplexPortal"/>
</dbReference>
<dbReference type="FunFam" id="2.130.10.10:FF:000876">
    <property type="entry name" value="Cft1p"/>
    <property type="match status" value="1"/>
</dbReference>
<dbReference type="FunFam" id="2.130.10.10:FF:000937">
    <property type="entry name" value="Cft1p"/>
    <property type="match status" value="1"/>
</dbReference>
<dbReference type="Gene3D" id="2.130.10.10">
    <property type="entry name" value="YVTN repeat-like/Quinoprotein amine dehydrogenase"/>
    <property type="match status" value="3"/>
</dbReference>
<dbReference type="InterPro" id="IPR018846">
    <property type="entry name" value="Beta-prop_RSE1/DDB1/CPSF1_1st"/>
</dbReference>
<dbReference type="InterPro" id="IPR004871">
    <property type="entry name" value="Cleavage/polyA-sp_fac_asu_C"/>
</dbReference>
<dbReference type="InterPro" id="IPR050358">
    <property type="entry name" value="RSE1/DDB1/CFT1/CPSF1"/>
</dbReference>
<dbReference type="InterPro" id="IPR015943">
    <property type="entry name" value="WD40/YVTN_repeat-like_dom_sf"/>
</dbReference>
<dbReference type="PANTHER" id="PTHR10644">
    <property type="entry name" value="DNA REPAIR/RNA PROCESSING CPSF FAMILY"/>
    <property type="match status" value="1"/>
</dbReference>
<dbReference type="Pfam" id="PF10433">
    <property type="entry name" value="Beta-prop_RSE1_1st"/>
    <property type="match status" value="1"/>
</dbReference>
<dbReference type="Pfam" id="PF03178">
    <property type="entry name" value="CPSF_A"/>
    <property type="match status" value="1"/>
</dbReference>
<sequence>MNVYDDVLDATVVSHSLATHFTTSDYEELLVVRTNILSVYRPTRDGKLYLTDEFKFHGLITDIGLIPQKDSPLSCLLLCTGVAKISILKFNTLTNSIDTLSLHYYEGKFKGKSLVELAKISTLRMDPGSSCALLFNNDIIAFLPFHVNKNDDDEEEEDEDENIDDSELIHSMNQKSQGTNTFNKRKRTKLGDKFTAPSVVLVASELYEGAKNIIDIQFLKNFTKPTIALLYQPKLVWAGNTTISKLPTQYVILTLNIQPAESATKIESTTIAFVKELPWDLHTIVPVSNGAIIVGTNELAFLDNTGVLQSTVLLNSFADKELQKTKIINNSSLEIMFREKNTTSIWIPSSKSKNGGSNNDETLLLMDLKSNIYYIQMEAEGRLLIKFDIFKLPIVNDLLKENSNPKCITRLNATNSNKNMDLFIGFGSGNALVLRLNNLKSTIETREAHNPSSGTNSLMDINDDDDEEMDDLYADEAPENGLTTNDSKGTVETVQPFDIELLSSLRNVGPITSLTVGKVSSIDDVVKGLPNPNKNEYSLVATSGNGSGSHLTVIQTSVQPEIELALKFISITQIWNLKIKGRDRYLITTDSTKSRSDIYESDNNFKLHKGGRLRRDATTVYISMFGEEKRIIQVTTNHLYLYDTHFRRLTTIKFDYEVIHVSVMDPYILVTVSRGDIKIFELEEKNKRKLLKVDLPEILNEMVITSGLILKSNMCNEFLIGLSKSQEEQLLFTFVTADNQIIFFTKDHNDRIFQLNGVDQLNESLYISTYQLGDEIVPDPSIKQVMINKLGHDNKEEYLTILTFGGEIYQYRKLPQRRSRFYRNVTRNDLAITGAPDNAYAKGVSSIERIMHYFPDYNGYSVIFVTGSVPYILIKEDDSTPKIFKFGNIPLVSVTPWSERSVMCVDDIKNARVYTLTTDNMYYGNKLPLKQIKISNVLDDYKTLQKLVYHERAQLFLVSYCKRVPYEALGEDGEKVIGYDENVPHAEGFQSGILLINPKSWKVIDKIDFPKNSVVNEMRSSMIQINSKTKRKREYIIAGVANATTEDTPPTGAFHIYDVIEVVPEPGKPDTNYKLKEIFQEEVSGTVSTVCEVSGRFMISQSQKVLVRDIQEDNSVIPVAFLDIPVFVTDSKSFGNLLIIGDAMQGFQFIGFDAEPYRMISLGRSMSKFQTMSLEFLVNGGDMYFAATDADRNVHVLKYAPDEPNSLSGQRLVHCSSFTLHSTNSCMMLLPRNEEFGSPQVPSFQNVGGQVDGSVFKIVPLSEEKYRRLYVIQQQIIDRELQLGGLNPRMERLANDFYQMGHSMRPMLDFNVIRRFCGLAIDRRKSIAQKAGRHAHFEAWRDIINIEFSMRSLCQGK</sequence>
<keyword id="KW-0002">3D-structure</keyword>
<keyword id="KW-0507">mRNA processing</keyword>
<keyword id="KW-0539">Nucleus</keyword>
<keyword id="KW-1185">Reference proteome</keyword>
<keyword id="KW-0694">RNA-binding</keyword>
<accession>Q06632</accession>
<accession>D6VST0</accession>
<gene>
    <name type="primary">CFT1</name>
    <name type="synonym">YHH1</name>
    <name type="ordered locus">YDR301W</name>
</gene>